<feature type="chain" id="PRO_0000149015" description="Ribosome biogenesis protein Nop10">
    <location>
        <begin position="1"/>
        <end position="60"/>
    </location>
</feature>
<feature type="region of interest" description="Disordered" evidence="2">
    <location>
        <begin position="36"/>
        <end position="60"/>
    </location>
</feature>
<name>NOP10_HALMA</name>
<gene>
    <name type="primary">nop10</name>
    <name type="ordered locus">rrnAC3511</name>
</gene>
<comment type="function">
    <text evidence="1">Involved in ribosome biogenesis; more specifically in 18S rRNA pseudouridylation and in cleavage of pre-rRNA.</text>
</comment>
<comment type="similarity">
    <text evidence="3">Belongs to the NOP10 family.</text>
</comment>
<keyword id="KW-1185">Reference proteome</keyword>
<keyword id="KW-0687">Ribonucleoprotein</keyword>
<keyword id="KW-0690">Ribosome biogenesis</keyword>
<keyword id="KW-0698">rRNA processing</keyword>
<protein>
    <recommendedName>
        <fullName>Ribosome biogenesis protein Nop10</fullName>
    </recommendedName>
</protein>
<dbReference type="EMBL" id="AY596297">
    <property type="protein sequence ID" value="AAV48180.1"/>
    <property type="molecule type" value="Genomic_DNA"/>
</dbReference>
<dbReference type="RefSeq" id="WP_004963595.1">
    <property type="nucleotide sequence ID" value="NZ_CP039138.1"/>
</dbReference>
<dbReference type="SMR" id="Q5UX23"/>
<dbReference type="STRING" id="272569.rrnAC3511"/>
<dbReference type="PaxDb" id="272569-rrnAC3511"/>
<dbReference type="EnsemblBacteria" id="AAV48180">
    <property type="protein sequence ID" value="AAV48180"/>
    <property type="gene ID" value="rrnAC3511"/>
</dbReference>
<dbReference type="KEGG" id="hma:rrnAC3511"/>
<dbReference type="PATRIC" id="fig|272569.17.peg.4017"/>
<dbReference type="eggNOG" id="arCOG00906">
    <property type="taxonomic scope" value="Archaea"/>
</dbReference>
<dbReference type="HOGENOM" id="CLU_196480_1_0_2"/>
<dbReference type="Proteomes" id="UP000001169">
    <property type="component" value="Chromosome I"/>
</dbReference>
<dbReference type="GO" id="GO:1990904">
    <property type="term" value="C:ribonucleoprotein complex"/>
    <property type="evidence" value="ECO:0007669"/>
    <property type="project" value="UniProtKB-KW"/>
</dbReference>
<dbReference type="GO" id="GO:0030515">
    <property type="term" value="F:snoRNA binding"/>
    <property type="evidence" value="ECO:0007669"/>
    <property type="project" value="InterPro"/>
</dbReference>
<dbReference type="GO" id="GO:0001522">
    <property type="term" value="P:pseudouridine synthesis"/>
    <property type="evidence" value="ECO:0007669"/>
    <property type="project" value="InterPro"/>
</dbReference>
<dbReference type="GO" id="GO:0006364">
    <property type="term" value="P:rRNA processing"/>
    <property type="evidence" value="ECO:0007669"/>
    <property type="project" value="UniProtKB-UniRule"/>
</dbReference>
<dbReference type="Gene3D" id="2.20.28.40">
    <property type="entry name" value="H/ACA ribonucleoprotein complex, subunit Nop10"/>
    <property type="match status" value="1"/>
</dbReference>
<dbReference type="HAMAP" id="MF_00803">
    <property type="entry name" value="Nop10"/>
    <property type="match status" value="1"/>
</dbReference>
<dbReference type="InterPro" id="IPR007264">
    <property type="entry name" value="H/ACA_rnp_Nop10"/>
</dbReference>
<dbReference type="InterPro" id="IPR036756">
    <property type="entry name" value="H/ACA_rnp_Nop10_sf"/>
</dbReference>
<dbReference type="InterPro" id="IPR023532">
    <property type="entry name" value="Nop10_arc-typ"/>
</dbReference>
<dbReference type="NCBIfam" id="NF009623">
    <property type="entry name" value="PRK13130.1"/>
    <property type="match status" value="1"/>
</dbReference>
<dbReference type="Pfam" id="PF04135">
    <property type="entry name" value="Nop10p"/>
    <property type="match status" value="1"/>
</dbReference>
<dbReference type="SUPFAM" id="SSF144210">
    <property type="entry name" value="Nop10-like SnoRNP"/>
    <property type="match status" value="1"/>
</dbReference>
<organism>
    <name type="scientific">Haloarcula marismortui (strain ATCC 43049 / DSM 3752 / JCM 8966 / VKM B-1809)</name>
    <name type="common">Halobacterium marismortui</name>
    <dbReference type="NCBI Taxonomy" id="272569"/>
    <lineage>
        <taxon>Archaea</taxon>
        <taxon>Methanobacteriati</taxon>
        <taxon>Methanobacteriota</taxon>
        <taxon>Stenosarchaea group</taxon>
        <taxon>Halobacteria</taxon>
        <taxon>Halobacteriales</taxon>
        <taxon>Haloarculaceae</taxon>
        <taxon>Haloarcula</taxon>
    </lineage>
</organism>
<accession>Q5UX23</accession>
<sequence>MKSDIHVCAVWESEHDRPVYTLDDTCPECGAEAVNSAPAPFSPEDSYGEYRRSLKRRSRE</sequence>
<reference key="1">
    <citation type="journal article" date="2004" name="Genome Res.">
        <title>Genome sequence of Haloarcula marismortui: a halophilic archaeon from the Dead Sea.</title>
        <authorList>
            <person name="Baliga N.S."/>
            <person name="Bonneau R."/>
            <person name="Facciotti M.T."/>
            <person name="Pan M."/>
            <person name="Glusman G."/>
            <person name="Deutsch E.W."/>
            <person name="Shannon P."/>
            <person name="Chiu Y."/>
            <person name="Weng R.S."/>
            <person name="Gan R.R."/>
            <person name="Hung P."/>
            <person name="Date S.V."/>
            <person name="Marcotte E."/>
            <person name="Hood L."/>
            <person name="Ng W.V."/>
        </authorList>
    </citation>
    <scope>NUCLEOTIDE SEQUENCE [LARGE SCALE GENOMIC DNA]</scope>
    <source>
        <strain>ATCC 43049 / DSM 3752 / JCM 8966 / VKM B-1809</strain>
    </source>
</reference>
<evidence type="ECO:0000250" key="1"/>
<evidence type="ECO:0000256" key="2">
    <source>
        <dbReference type="SAM" id="MobiDB-lite"/>
    </source>
</evidence>
<evidence type="ECO:0000305" key="3"/>
<proteinExistence type="inferred from homology"/>